<feature type="chain" id="PRO_0000266694" description="Small ribosomal subunit protein bS21">
    <location>
        <begin position="1"/>
        <end position="58"/>
    </location>
</feature>
<proteinExistence type="inferred from homology"/>
<comment type="similarity">
    <text evidence="1">Belongs to the bacterial ribosomal protein bS21 family.</text>
</comment>
<reference key="1">
    <citation type="journal article" date="2006" name="Proc. Natl. Acad. Sci. U.S.A.">
        <title>The complete genome sequence of Lactobacillus bulgaricus reveals extensive and ongoing reductive evolution.</title>
        <authorList>
            <person name="van de Guchte M."/>
            <person name="Penaud S."/>
            <person name="Grimaldi C."/>
            <person name="Barbe V."/>
            <person name="Bryson K."/>
            <person name="Nicolas P."/>
            <person name="Robert C."/>
            <person name="Oztas S."/>
            <person name="Mangenot S."/>
            <person name="Couloux A."/>
            <person name="Loux V."/>
            <person name="Dervyn R."/>
            <person name="Bossy R."/>
            <person name="Bolotin A."/>
            <person name="Batto J.-M."/>
            <person name="Walunas T."/>
            <person name="Gibrat J.-F."/>
            <person name="Bessieres P."/>
            <person name="Weissenbach J."/>
            <person name="Ehrlich S.D."/>
            <person name="Maguin E."/>
        </authorList>
    </citation>
    <scope>NUCLEOTIDE SEQUENCE [LARGE SCALE GENOMIC DNA]</scope>
    <source>
        <strain>ATCC 11842 / DSM 20081 / BCRC 10696 / JCM 1002 / NBRC 13953 / NCIMB 11778 / NCTC 12712 / WDCM 00102 / Lb 14</strain>
    </source>
</reference>
<evidence type="ECO:0000255" key="1">
    <source>
        <dbReference type="HAMAP-Rule" id="MF_00358"/>
    </source>
</evidence>
<evidence type="ECO:0000305" key="2"/>
<organism>
    <name type="scientific">Lactobacillus delbrueckii subsp. bulgaricus (strain ATCC 11842 / DSM 20081 / BCRC 10696 / JCM 1002 / NBRC 13953 / NCIMB 11778 / NCTC 12712 / WDCM 00102 / Lb 14)</name>
    <dbReference type="NCBI Taxonomy" id="390333"/>
    <lineage>
        <taxon>Bacteria</taxon>
        <taxon>Bacillati</taxon>
        <taxon>Bacillota</taxon>
        <taxon>Bacilli</taxon>
        <taxon>Lactobacillales</taxon>
        <taxon>Lactobacillaceae</taxon>
        <taxon>Lactobacillus</taxon>
    </lineage>
</organism>
<keyword id="KW-1185">Reference proteome</keyword>
<keyword id="KW-0687">Ribonucleoprotein</keyword>
<keyword id="KW-0689">Ribosomal protein</keyword>
<name>RS21_LACDA</name>
<sequence length="58" mass="7096">MAKTIVHENESIDDALRRFKRSVSRSGTLQEYRKREFYEKPSVRRKLKSEAARKRRHY</sequence>
<protein>
    <recommendedName>
        <fullName evidence="1">Small ribosomal subunit protein bS21</fullName>
    </recommendedName>
    <alternativeName>
        <fullName evidence="2">30S ribosomal protein S21</fullName>
    </alternativeName>
</protein>
<accession>Q1G9W2</accession>
<dbReference type="EMBL" id="CR954253">
    <property type="protein sequence ID" value="CAI98057.1"/>
    <property type="molecule type" value="Genomic_DNA"/>
</dbReference>
<dbReference type="RefSeq" id="WP_002880182.1">
    <property type="nucleotide sequence ID" value="NZ_JQAV01000005.1"/>
</dbReference>
<dbReference type="SMR" id="Q1G9W2"/>
<dbReference type="STRING" id="390333.Ldb1255"/>
<dbReference type="GeneID" id="97459612"/>
<dbReference type="KEGG" id="ldb:Ldb1255"/>
<dbReference type="eggNOG" id="COG0828">
    <property type="taxonomic scope" value="Bacteria"/>
</dbReference>
<dbReference type="HOGENOM" id="CLU_159258_3_2_9"/>
<dbReference type="BioCyc" id="LDEL390333:LDB_RS10140-MONOMER"/>
<dbReference type="Proteomes" id="UP000001259">
    <property type="component" value="Chromosome"/>
</dbReference>
<dbReference type="GO" id="GO:1990904">
    <property type="term" value="C:ribonucleoprotein complex"/>
    <property type="evidence" value="ECO:0007669"/>
    <property type="project" value="UniProtKB-KW"/>
</dbReference>
<dbReference type="GO" id="GO:0005840">
    <property type="term" value="C:ribosome"/>
    <property type="evidence" value="ECO:0007669"/>
    <property type="project" value="UniProtKB-KW"/>
</dbReference>
<dbReference type="GO" id="GO:0003735">
    <property type="term" value="F:structural constituent of ribosome"/>
    <property type="evidence" value="ECO:0007669"/>
    <property type="project" value="InterPro"/>
</dbReference>
<dbReference type="GO" id="GO:0006412">
    <property type="term" value="P:translation"/>
    <property type="evidence" value="ECO:0007669"/>
    <property type="project" value="UniProtKB-UniRule"/>
</dbReference>
<dbReference type="Gene3D" id="1.20.5.1150">
    <property type="entry name" value="Ribosomal protein S8"/>
    <property type="match status" value="1"/>
</dbReference>
<dbReference type="HAMAP" id="MF_00358">
    <property type="entry name" value="Ribosomal_bS21"/>
    <property type="match status" value="1"/>
</dbReference>
<dbReference type="InterPro" id="IPR001911">
    <property type="entry name" value="Ribosomal_bS21"/>
</dbReference>
<dbReference type="InterPro" id="IPR018278">
    <property type="entry name" value="Ribosomal_bS21_CS"/>
</dbReference>
<dbReference type="InterPro" id="IPR038380">
    <property type="entry name" value="Ribosomal_bS21_sf"/>
</dbReference>
<dbReference type="NCBIfam" id="TIGR00030">
    <property type="entry name" value="S21p"/>
    <property type="match status" value="1"/>
</dbReference>
<dbReference type="PANTHER" id="PTHR21109">
    <property type="entry name" value="MITOCHONDRIAL 28S RIBOSOMAL PROTEIN S21"/>
    <property type="match status" value="1"/>
</dbReference>
<dbReference type="PANTHER" id="PTHR21109:SF22">
    <property type="entry name" value="SMALL RIBOSOMAL SUBUNIT PROTEIN BS21"/>
    <property type="match status" value="1"/>
</dbReference>
<dbReference type="Pfam" id="PF01165">
    <property type="entry name" value="Ribosomal_S21"/>
    <property type="match status" value="1"/>
</dbReference>
<dbReference type="PRINTS" id="PR00976">
    <property type="entry name" value="RIBOSOMALS21"/>
</dbReference>
<dbReference type="PROSITE" id="PS01181">
    <property type="entry name" value="RIBOSOMAL_S21"/>
    <property type="match status" value="1"/>
</dbReference>
<gene>
    <name evidence="1" type="primary">rpsU</name>
    <name type="ordered locus">Ldb1255</name>
</gene>